<keyword id="KW-0433">Leucine-rich repeat</keyword>
<keyword id="KW-0677">Repeat</keyword>
<name>SUR8_DROER</name>
<comment type="function">
    <text evidence="1">Acts as a Ras effector and participates in MAPK pathway activation. Probably acts as a regulatory subunit of protein phosphatase that specifically dephosphorylates Raf kinase and stimulate Raf activity at specialized signaling complexes upon Ras activation (By similarity).</text>
</comment>
<comment type="similarity">
    <text evidence="3">Belongs to the SHOC2 family.</text>
</comment>
<organism>
    <name type="scientific">Drosophila erecta</name>
    <name type="common">Fruit fly</name>
    <dbReference type="NCBI Taxonomy" id="7220"/>
    <lineage>
        <taxon>Eukaryota</taxon>
        <taxon>Metazoa</taxon>
        <taxon>Ecdysozoa</taxon>
        <taxon>Arthropoda</taxon>
        <taxon>Hexapoda</taxon>
        <taxon>Insecta</taxon>
        <taxon>Pterygota</taxon>
        <taxon>Neoptera</taxon>
        <taxon>Endopterygota</taxon>
        <taxon>Diptera</taxon>
        <taxon>Brachycera</taxon>
        <taxon>Muscomorpha</taxon>
        <taxon>Ephydroidea</taxon>
        <taxon>Drosophilidae</taxon>
        <taxon>Drosophila</taxon>
        <taxon>Sophophora</taxon>
    </lineage>
</organism>
<evidence type="ECO:0000250" key="1"/>
<evidence type="ECO:0000256" key="2">
    <source>
        <dbReference type="SAM" id="MobiDB-lite"/>
    </source>
</evidence>
<evidence type="ECO:0000305" key="3"/>
<reference key="1">
    <citation type="journal article" date="2007" name="Nature">
        <title>Evolution of genes and genomes on the Drosophila phylogeny.</title>
        <authorList>
            <consortium name="Drosophila 12 genomes consortium"/>
        </authorList>
    </citation>
    <scope>NUCLEOTIDE SEQUENCE [LARGE SCALE GENOMIC DNA]</scope>
    <source>
        <strain>Tucson 14021-0224.01</strain>
    </source>
</reference>
<dbReference type="EMBL" id="CH954181">
    <property type="protein sequence ID" value="EDV48728.1"/>
    <property type="molecule type" value="Genomic_DNA"/>
</dbReference>
<dbReference type="RefSeq" id="XP_001979770.2">
    <property type="nucleotide sequence ID" value="XM_001979734.2"/>
</dbReference>
<dbReference type="SMR" id="B3P3E8"/>
<dbReference type="EnsemblMetazoa" id="FBtr0136832">
    <property type="protein sequence ID" value="FBpp0135324"/>
    <property type="gene ID" value="FBgn0109008"/>
</dbReference>
<dbReference type="EnsemblMetazoa" id="XM_026976130.1">
    <property type="protein sequence ID" value="XP_026831931.1"/>
    <property type="gene ID" value="LOC6552349"/>
</dbReference>
<dbReference type="EnsemblMetazoa" id="XM_026976131.1">
    <property type="protein sequence ID" value="XP_026831932.1"/>
    <property type="gene ID" value="LOC6552349"/>
</dbReference>
<dbReference type="eggNOG" id="KOG0619">
    <property type="taxonomic scope" value="Eukaryota"/>
</dbReference>
<dbReference type="HOGENOM" id="CLU_000288_18_23_1"/>
<dbReference type="OMA" id="NQFTSYP"/>
<dbReference type="OrthoDB" id="676979at2759"/>
<dbReference type="PhylomeDB" id="B3P3E8"/>
<dbReference type="ChiTaRS" id="Sur-8">
    <property type="organism name" value="fly"/>
</dbReference>
<dbReference type="Proteomes" id="UP000008711">
    <property type="component" value="Unassembled WGS sequence"/>
</dbReference>
<dbReference type="FunFam" id="3.80.10.10:FF:000031">
    <property type="entry name" value="leucine-rich repeat protein SHOC-2"/>
    <property type="match status" value="1"/>
</dbReference>
<dbReference type="FunFam" id="3.80.10.10:FF:000115">
    <property type="entry name" value="leucine-rich repeat protein SHOC-2"/>
    <property type="match status" value="1"/>
</dbReference>
<dbReference type="FunFam" id="3.80.10.10:FF:000281">
    <property type="entry name" value="Leucine-rich repeat protein soc-2"/>
    <property type="match status" value="1"/>
</dbReference>
<dbReference type="FunFam" id="3.80.10.10:FF:000450">
    <property type="entry name" value="Leucine-rich repeat protein soc-2"/>
    <property type="match status" value="1"/>
</dbReference>
<dbReference type="Gene3D" id="3.80.10.10">
    <property type="entry name" value="Ribonuclease Inhibitor"/>
    <property type="match status" value="4"/>
</dbReference>
<dbReference type="InterPro" id="IPR001611">
    <property type="entry name" value="Leu-rich_rpt"/>
</dbReference>
<dbReference type="InterPro" id="IPR003591">
    <property type="entry name" value="Leu-rich_rpt_typical-subtyp"/>
</dbReference>
<dbReference type="InterPro" id="IPR050715">
    <property type="entry name" value="LRR-SigEffector_domain"/>
</dbReference>
<dbReference type="InterPro" id="IPR032675">
    <property type="entry name" value="LRR_dom_sf"/>
</dbReference>
<dbReference type="InterPro" id="IPR055414">
    <property type="entry name" value="LRR_R13L4/SHOC2-like"/>
</dbReference>
<dbReference type="PANTHER" id="PTHR45752:SF187">
    <property type="entry name" value="LEUCINE-RICH REPEAT AND IQ DOMAIN-CONTAINING PROTEIN 4"/>
    <property type="match status" value="1"/>
</dbReference>
<dbReference type="PANTHER" id="PTHR45752">
    <property type="entry name" value="LEUCINE-RICH REPEAT-CONTAINING"/>
    <property type="match status" value="1"/>
</dbReference>
<dbReference type="Pfam" id="PF00560">
    <property type="entry name" value="LRR_1"/>
    <property type="match status" value="1"/>
</dbReference>
<dbReference type="Pfam" id="PF23598">
    <property type="entry name" value="LRR_14"/>
    <property type="match status" value="2"/>
</dbReference>
<dbReference type="Pfam" id="PF13855">
    <property type="entry name" value="LRR_8"/>
    <property type="match status" value="1"/>
</dbReference>
<dbReference type="SMART" id="SM00364">
    <property type="entry name" value="LRR_BAC"/>
    <property type="match status" value="10"/>
</dbReference>
<dbReference type="SMART" id="SM00365">
    <property type="entry name" value="LRR_SD22"/>
    <property type="match status" value="7"/>
</dbReference>
<dbReference type="SMART" id="SM00369">
    <property type="entry name" value="LRR_TYP"/>
    <property type="match status" value="15"/>
</dbReference>
<dbReference type="SUPFAM" id="SSF52058">
    <property type="entry name" value="L domain-like"/>
    <property type="match status" value="2"/>
</dbReference>
<dbReference type="PROSITE" id="PS51450">
    <property type="entry name" value="LRR"/>
    <property type="match status" value="18"/>
</dbReference>
<feature type="chain" id="PRO_0000385635" description="Leucine-rich repeat protein soc-2 homolog">
    <location>
        <begin position="1"/>
        <end position="644"/>
    </location>
</feature>
<feature type="repeat" description="LRR 1">
    <location>
        <begin position="164"/>
        <end position="185"/>
    </location>
</feature>
<feature type="repeat" description="LRR 2">
    <location>
        <begin position="187"/>
        <end position="208"/>
    </location>
</feature>
<feature type="repeat" description="LRR 3">
    <location>
        <begin position="210"/>
        <end position="231"/>
    </location>
</feature>
<feature type="repeat" description="LRR 4">
    <location>
        <begin position="233"/>
        <end position="254"/>
    </location>
</feature>
<feature type="repeat" description="LRR 5">
    <location>
        <begin position="256"/>
        <end position="277"/>
    </location>
</feature>
<feature type="repeat" description="LRR 6">
    <location>
        <begin position="279"/>
        <end position="300"/>
    </location>
</feature>
<feature type="repeat" description="LRR 7">
    <location>
        <begin position="302"/>
        <end position="323"/>
    </location>
</feature>
<feature type="repeat" description="LRR 8">
    <location>
        <begin position="325"/>
        <end position="346"/>
    </location>
</feature>
<feature type="repeat" description="LRR 9">
    <location>
        <begin position="348"/>
        <end position="370"/>
    </location>
</feature>
<feature type="repeat" description="LRR 10">
    <location>
        <begin position="371"/>
        <end position="392"/>
    </location>
</feature>
<feature type="repeat" description="LRR 11">
    <location>
        <begin position="395"/>
        <end position="416"/>
    </location>
</feature>
<feature type="repeat" description="LRR 12">
    <location>
        <begin position="419"/>
        <end position="440"/>
    </location>
</feature>
<feature type="repeat" description="LRR 13">
    <location>
        <begin position="443"/>
        <end position="464"/>
    </location>
</feature>
<feature type="repeat" description="LRR 14">
    <location>
        <begin position="466"/>
        <end position="487"/>
    </location>
</feature>
<feature type="repeat" description="LRR 15">
    <location>
        <begin position="489"/>
        <end position="510"/>
    </location>
</feature>
<feature type="repeat" description="LRR 16">
    <location>
        <begin position="512"/>
        <end position="533"/>
    </location>
</feature>
<feature type="repeat" description="LRR 17">
    <location>
        <begin position="535"/>
        <end position="556"/>
    </location>
</feature>
<feature type="repeat" description="LRR 18">
    <location>
        <begin position="558"/>
        <end position="579"/>
    </location>
</feature>
<feature type="repeat" description="LRR 19">
    <location>
        <begin position="581"/>
        <end position="603"/>
    </location>
</feature>
<feature type="repeat" description="LRR 20">
    <location>
        <begin position="605"/>
        <end position="626"/>
    </location>
</feature>
<feature type="region of interest" description="Disordered" evidence="2">
    <location>
        <begin position="1"/>
        <end position="60"/>
    </location>
</feature>
<feature type="region of interest" description="Disordered" evidence="2">
    <location>
        <begin position="82"/>
        <end position="150"/>
    </location>
</feature>
<feature type="compositionally biased region" description="Low complexity" evidence="2">
    <location>
        <begin position="1"/>
        <end position="19"/>
    </location>
</feature>
<feature type="compositionally biased region" description="Gly residues" evidence="2">
    <location>
        <begin position="26"/>
        <end position="50"/>
    </location>
</feature>
<feature type="compositionally biased region" description="Gly residues" evidence="2">
    <location>
        <begin position="87"/>
        <end position="96"/>
    </location>
</feature>
<feature type="compositionally biased region" description="Polar residues" evidence="2">
    <location>
        <begin position="99"/>
        <end position="117"/>
    </location>
</feature>
<sequence>MNLCSSGATASTTSLSSTGQAERSGGVPGGGAEGGGGDGGSGNSGGGGKANDGSAEAPTLCFAGGSGTAGAITGSAELTNANSPANGAGGASGFTGSGQQPTGSNGHSHLHNENNANMPPETRPKMVTVKHPESNKPKPTTKKSKPIQADQDVIKALQRCRDEGIKRLDLSKSSITVIPSTVKECVHLTELYLYSNKIGQLPPEIGCLVSLRNLALNENSLTSLPESLQNCSQLKVLDLRHNKLAEIPPVIYRLRSLTTLYLRFNRITAVADDLRQLVNLTMLSLRENKIRELGSAIGALVNLTTLDVSHNHLEHLPEDIGNCVNLSALDLQHNELLDIPDSIGNLKSLVRLGMRYNRLNSVPATLKNCKSMDEFNVEGNGITQLPDGMLASLSGLTTITLSRNQFASYPTGGPAQFTNVYSINLEHNRIDKIPYGIFSRAKGLTKLNMKENMLTALPLDIGTWVNMVELNLATNALQKLPDDIMNLQNLEILILSNNMLKKIPNTIGNLRRLRILDLEENRIEVLPHEIGLLHELQRLILQTNQITMLPRSIGHLGNLTHLSVSENNLQFLPEEIGSLESLENLYINQNPGLEKLPFELALCQNLKYLNIDKCPLSTIPPEIQAGGPSLVLQWLKMHSPYRQM</sequence>
<gene>
    <name type="primary">Sur-8</name>
    <name type="ORF">GG16778</name>
</gene>
<accession>B3P3E8</accession>
<protein>
    <recommendedName>
        <fullName>Leucine-rich repeat protein soc-2 homolog</fullName>
    </recommendedName>
    <alternativeName>
        <fullName>Protein Sur-8 homolog</fullName>
    </alternativeName>
    <alternativeName>
        <fullName>Protein soc-2 homolog</fullName>
    </alternativeName>
</protein>
<proteinExistence type="inferred from homology"/>